<keyword id="KW-0067">ATP-binding</keyword>
<keyword id="KW-0963">Cytoplasm</keyword>
<keyword id="KW-0418">Kinase</keyword>
<keyword id="KW-0547">Nucleotide-binding</keyword>
<keyword id="KW-0665">Pyrimidine biosynthesis</keyword>
<keyword id="KW-1185">Reference proteome</keyword>
<keyword id="KW-0808">Transferase</keyword>
<dbReference type="EC" id="2.7.4.22" evidence="1"/>
<dbReference type="EMBL" id="BA000039">
    <property type="protein sequence ID" value="BAC07813.1"/>
    <property type="molecule type" value="Genomic_DNA"/>
</dbReference>
<dbReference type="RefSeq" id="NP_681051.1">
    <property type="nucleotide sequence ID" value="NC_004113.1"/>
</dbReference>
<dbReference type="RefSeq" id="WP_011056115.1">
    <property type="nucleotide sequence ID" value="NC_004113.1"/>
</dbReference>
<dbReference type="SMR" id="Q8DM63"/>
<dbReference type="STRING" id="197221.gene:10746842"/>
<dbReference type="EnsemblBacteria" id="BAC07813">
    <property type="protein sequence ID" value="BAC07813"/>
    <property type="gene ID" value="BAC07813"/>
</dbReference>
<dbReference type="KEGG" id="tel:tll0260"/>
<dbReference type="PATRIC" id="fig|197221.4.peg.273"/>
<dbReference type="eggNOG" id="COG0528">
    <property type="taxonomic scope" value="Bacteria"/>
</dbReference>
<dbReference type="UniPathway" id="UPA00159">
    <property type="reaction ID" value="UER00275"/>
</dbReference>
<dbReference type="Proteomes" id="UP000000440">
    <property type="component" value="Chromosome"/>
</dbReference>
<dbReference type="GO" id="GO:0005737">
    <property type="term" value="C:cytoplasm"/>
    <property type="evidence" value="ECO:0007669"/>
    <property type="project" value="UniProtKB-SubCell"/>
</dbReference>
<dbReference type="GO" id="GO:0005524">
    <property type="term" value="F:ATP binding"/>
    <property type="evidence" value="ECO:0007669"/>
    <property type="project" value="UniProtKB-KW"/>
</dbReference>
<dbReference type="GO" id="GO:0033862">
    <property type="term" value="F:UMP kinase activity"/>
    <property type="evidence" value="ECO:0007669"/>
    <property type="project" value="UniProtKB-EC"/>
</dbReference>
<dbReference type="GO" id="GO:0044210">
    <property type="term" value="P:'de novo' CTP biosynthetic process"/>
    <property type="evidence" value="ECO:0007669"/>
    <property type="project" value="UniProtKB-UniRule"/>
</dbReference>
<dbReference type="GO" id="GO:0006225">
    <property type="term" value="P:UDP biosynthetic process"/>
    <property type="evidence" value="ECO:0007669"/>
    <property type="project" value="TreeGrafter"/>
</dbReference>
<dbReference type="CDD" id="cd04254">
    <property type="entry name" value="AAK_UMPK-PyrH-Ec"/>
    <property type="match status" value="1"/>
</dbReference>
<dbReference type="FunFam" id="3.40.1160.10:FF:000001">
    <property type="entry name" value="Uridylate kinase"/>
    <property type="match status" value="1"/>
</dbReference>
<dbReference type="Gene3D" id="3.40.1160.10">
    <property type="entry name" value="Acetylglutamate kinase-like"/>
    <property type="match status" value="1"/>
</dbReference>
<dbReference type="HAMAP" id="MF_01220_B">
    <property type="entry name" value="PyrH_B"/>
    <property type="match status" value="1"/>
</dbReference>
<dbReference type="InterPro" id="IPR036393">
    <property type="entry name" value="AceGlu_kinase-like_sf"/>
</dbReference>
<dbReference type="InterPro" id="IPR001048">
    <property type="entry name" value="Asp/Glu/Uridylate_kinase"/>
</dbReference>
<dbReference type="InterPro" id="IPR011817">
    <property type="entry name" value="Uridylate_kinase"/>
</dbReference>
<dbReference type="InterPro" id="IPR015963">
    <property type="entry name" value="Uridylate_kinase_bac"/>
</dbReference>
<dbReference type="NCBIfam" id="TIGR02075">
    <property type="entry name" value="pyrH_bact"/>
    <property type="match status" value="1"/>
</dbReference>
<dbReference type="PANTHER" id="PTHR42833">
    <property type="entry name" value="URIDYLATE KINASE"/>
    <property type="match status" value="1"/>
</dbReference>
<dbReference type="PANTHER" id="PTHR42833:SF4">
    <property type="entry name" value="URIDYLATE KINASE PUMPKIN, CHLOROPLASTIC"/>
    <property type="match status" value="1"/>
</dbReference>
<dbReference type="Pfam" id="PF00696">
    <property type="entry name" value="AA_kinase"/>
    <property type="match status" value="1"/>
</dbReference>
<dbReference type="PIRSF" id="PIRSF005650">
    <property type="entry name" value="Uridylate_kin"/>
    <property type="match status" value="1"/>
</dbReference>
<dbReference type="SUPFAM" id="SSF53633">
    <property type="entry name" value="Carbamate kinase-like"/>
    <property type="match status" value="1"/>
</dbReference>
<comment type="function">
    <text evidence="1">Catalyzes the reversible phosphorylation of UMP to UDP.</text>
</comment>
<comment type="catalytic activity">
    <reaction evidence="1">
        <text>UMP + ATP = UDP + ADP</text>
        <dbReference type="Rhea" id="RHEA:24400"/>
        <dbReference type="ChEBI" id="CHEBI:30616"/>
        <dbReference type="ChEBI" id="CHEBI:57865"/>
        <dbReference type="ChEBI" id="CHEBI:58223"/>
        <dbReference type="ChEBI" id="CHEBI:456216"/>
        <dbReference type="EC" id="2.7.4.22"/>
    </reaction>
</comment>
<comment type="activity regulation">
    <text evidence="1">Inhibited by UTP.</text>
</comment>
<comment type="pathway">
    <text evidence="1">Pyrimidine metabolism; CTP biosynthesis via de novo pathway; UDP from UMP (UMPK route): step 1/1.</text>
</comment>
<comment type="subunit">
    <text evidence="1">Homohexamer.</text>
</comment>
<comment type="subcellular location">
    <subcellularLocation>
        <location evidence="1">Cytoplasm</location>
    </subcellularLocation>
</comment>
<comment type="similarity">
    <text evidence="1">Belongs to the UMP kinase family.</text>
</comment>
<feature type="chain" id="PRO_1000054043" description="Uridylate kinase">
    <location>
        <begin position="1"/>
        <end position="242"/>
    </location>
</feature>
<feature type="binding site" evidence="1">
    <location>
        <begin position="11"/>
        <end position="14"/>
    </location>
    <ligand>
        <name>ATP</name>
        <dbReference type="ChEBI" id="CHEBI:30616"/>
    </ligand>
</feature>
<feature type="binding site" evidence="1">
    <location>
        <position position="53"/>
    </location>
    <ligand>
        <name>UMP</name>
        <dbReference type="ChEBI" id="CHEBI:57865"/>
    </ligand>
</feature>
<feature type="binding site" evidence="1">
    <location>
        <position position="54"/>
    </location>
    <ligand>
        <name>ATP</name>
        <dbReference type="ChEBI" id="CHEBI:30616"/>
    </ligand>
</feature>
<feature type="binding site" evidence="1">
    <location>
        <position position="58"/>
    </location>
    <ligand>
        <name>ATP</name>
        <dbReference type="ChEBI" id="CHEBI:30616"/>
    </ligand>
</feature>
<feature type="binding site" evidence="1">
    <location>
        <position position="73"/>
    </location>
    <ligand>
        <name>UMP</name>
        <dbReference type="ChEBI" id="CHEBI:57865"/>
    </ligand>
</feature>
<feature type="binding site" evidence="1">
    <location>
        <begin position="134"/>
        <end position="141"/>
    </location>
    <ligand>
        <name>UMP</name>
        <dbReference type="ChEBI" id="CHEBI:57865"/>
    </ligand>
</feature>
<feature type="binding site" evidence="1">
    <location>
        <position position="161"/>
    </location>
    <ligand>
        <name>ATP</name>
        <dbReference type="ChEBI" id="CHEBI:30616"/>
    </ligand>
</feature>
<feature type="binding site" evidence="1">
    <location>
        <position position="167"/>
    </location>
    <ligand>
        <name>ATP</name>
        <dbReference type="ChEBI" id="CHEBI:30616"/>
    </ligand>
</feature>
<feature type="binding site" evidence="1">
    <location>
        <position position="170"/>
    </location>
    <ligand>
        <name>ATP</name>
        <dbReference type="ChEBI" id="CHEBI:30616"/>
    </ligand>
</feature>
<accession>Q8DM63</accession>
<reference key="1">
    <citation type="journal article" date="2002" name="DNA Res.">
        <title>Complete genome structure of the thermophilic cyanobacterium Thermosynechococcus elongatus BP-1.</title>
        <authorList>
            <person name="Nakamura Y."/>
            <person name="Kaneko T."/>
            <person name="Sato S."/>
            <person name="Ikeuchi M."/>
            <person name="Katoh H."/>
            <person name="Sasamoto S."/>
            <person name="Watanabe A."/>
            <person name="Iriguchi M."/>
            <person name="Kawashima K."/>
            <person name="Kimura T."/>
            <person name="Kishida Y."/>
            <person name="Kiyokawa C."/>
            <person name="Kohara M."/>
            <person name="Matsumoto M."/>
            <person name="Matsuno A."/>
            <person name="Nakazaki N."/>
            <person name="Shimpo S."/>
            <person name="Sugimoto M."/>
            <person name="Takeuchi C."/>
            <person name="Yamada M."/>
            <person name="Tabata S."/>
        </authorList>
    </citation>
    <scope>NUCLEOTIDE SEQUENCE [LARGE SCALE GENOMIC DNA]</scope>
    <source>
        <strain>NIES-2133 / IAM M-273 / BP-1</strain>
    </source>
</reference>
<evidence type="ECO:0000255" key="1">
    <source>
        <dbReference type="HAMAP-Rule" id="MF_01220"/>
    </source>
</evidence>
<gene>
    <name evidence="1" type="primary">pyrH</name>
    <name type="ordered locus">tll0260</name>
</gene>
<protein>
    <recommendedName>
        <fullName evidence="1">Uridylate kinase</fullName>
        <shortName evidence="1">UK</shortName>
        <ecNumber evidence="1">2.7.4.22</ecNumber>
    </recommendedName>
    <alternativeName>
        <fullName evidence="1">Uridine monophosphate kinase</fullName>
        <shortName evidence="1">UMP kinase</shortName>
        <shortName evidence="1">UMPK</shortName>
    </alternativeName>
</protein>
<organism>
    <name type="scientific">Thermosynechococcus vestitus (strain NIES-2133 / IAM M-273 / BP-1)</name>
    <dbReference type="NCBI Taxonomy" id="197221"/>
    <lineage>
        <taxon>Bacteria</taxon>
        <taxon>Bacillati</taxon>
        <taxon>Cyanobacteriota</taxon>
        <taxon>Cyanophyceae</taxon>
        <taxon>Acaryochloridales</taxon>
        <taxon>Thermosynechococcaceae</taxon>
        <taxon>Thermosynechococcus</taxon>
    </lineage>
</organism>
<proteinExistence type="inferred from homology"/>
<name>PYRH_THEVB</name>
<sequence>MSPKYRRVLLKLSGEALMGNLNYGIDPKVVQSFASEIAQVVQAGVQTAIVVGGGNIFRGMKGAAAGMDRATADYIGMIATVMNAMTLQDALEQMNVPTRVQTAIAMQEVAEPYIRRRAIRHLEKGRVVIFGAGSGNPFFTTDTTAALRAAEIDAEVIFKATKVDGVYDADPHTHPNARRYRSLTYTHALTHNLAVMDSTAIALCKDNDIPIIVFSLETAGNIYRALTGEPIGTMVGGSCEIS</sequence>